<feature type="chain" id="PRO_0000121779" description="tRNA pseudouridine synthase B">
    <location>
        <begin position="1"/>
        <end position="306"/>
    </location>
</feature>
<feature type="active site" description="Nucleophile" evidence="1">
    <location>
        <position position="43"/>
    </location>
</feature>
<accession>Q5PAY2</accession>
<proteinExistence type="inferred from homology"/>
<name>TRUB_ANAMM</name>
<organism>
    <name type="scientific">Anaplasma marginale (strain St. Maries)</name>
    <dbReference type="NCBI Taxonomy" id="234826"/>
    <lineage>
        <taxon>Bacteria</taxon>
        <taxon>Pseudomonadati</taxon>
        <taxon>Pseudomonadota</taxon>
        <taxon>Alphaproteobacteria</taxon>
        <taxon>Rickettsiales</taxon>
        <taxon>Anaplasmataceae</taxon>
        <taxon>Anaplasma</taxon>
    </lineage>
</organism>
<keyword id="KW-0413">Isomerase</keyword>
<keyword id="KW-0819">tRNA processing</keyword>
<protein>
    <recommendedName>
        <fullName evidence="1">tRNA pseudouridine synthase B</fullName>
        <ecNumber evidence="1">5.4.99.25</ecNumber>
    </recommendedName>
    <alternativeName>
        <fullName evidence="1">tRNA pseudouridine(55) synthase</fullName>
        <shortName evidence="1">Psi55 synthase</shortName>
    </alternativeName>
    <alternativeName>
        <fullName evidence="1">tRNA pseudouridylate synthase</fullName>
    </alternativeName>
    <alternativeName>
        <fullName evidence="1">tRNA-uridine isomerase</fullName>
    </alternativeName>
</protein>
<sequence>MQSARVKYGWLNVDKPLHMSSGSVVGRVKKIFNCKVGHAGTLDPLATGVLPVAVGEATKTIPYAVDGLKSYAVTVQWGSQRSTDDAEGEIIKTSSLRPSADSIREALGQFVGNIRQVPPAFSAVRVRGVRAYRLARRGEAVSLPPKEVCIVSIDLLSADEESNTADFLIVCKKGVYIRSFARDLGASLGCFGYVSFLRRKSVGPFSEENSVTLDRLEALADADVLNEALLPISYVMGDALLRLHVDAEVAEIVKKGQSVSLQRTSLNGLYAAENYDMCYLSRVGGVPVAVCKVVNGTARPVRVFDV</sequence>
<reference key="1">
    <citation type="journal article" date="2005" name="Proc. Natl. Acad. Sci. U.S.A.">
        <title>Complete genome sequencing of Anaplasma marginale reveals that the surface is skewed to two superfamilies of outer membrane proteins.</title>
        <authorList>
            <person name="Brayton K.A."/>
            <person name="Kappmeyer L.S."/>
            <person name="Herndon D.R."/>
            <person name="Dark M.J."/>
            <person name="Tibbals D.L."/>
            <person name="Palmer G.H."/>
            <person name="McGuire T.C."/>
            <person name="Knowles D.P. Jr."/>
        </authorList>
    </citation>
    <scope>NUCLEOTIDE SEQUENCE [LARGE SCALE GENOMIC DNA]</scope>
    <source>
        <strain>St. Maries</strain>
    </source>
</reference>
<gene>
    <name evidence="1" type="primary">truB</name>
    <name type="ordered locus">AM524</name>
</gene>
<comment type="function">
    <text evidence="1">Responsible for synthesis of pseudouridine from uracil-55 in the psi GC loop of transfer RNAs.</text>
</comment>
<comment type="catalytic activity">
    <reaction evidence="1">
        <text>uridine(55) in tRNA = pseudouridine(55) in tRNA</text>
        <dbReference type="Rhea" id="RHEA:42532"/>
        <dbReference type="Rhea" id="RHEA-COMP:10101"/>
        <dbReference type="Rhea" id="RHEA-COMP:10102"/>
        <dbReference type="ChEBI" id="CHEBI:65314"/>
        <dbReference type="ChEBI" id="CHEBI:65315"/>
        <dbReference type="EC" id="5.4.99.25"/>
    </reaction>
</comment>
<comment type="similarity">
    <text evidence="1">Belongs to the pseudouridine synthase TruB family. Type 1 subfamily.</text>
</comment>
<dbReference type="EC" id="5.4.99.25" evidence="1"/>
<dbReference type="EMBL" id="CP000030">
    <property type="protein sequence ID" value="AAV86548.1"/>
    <property type="molecule type" value="Genomic_DNA"/>
</dbReference>
<dbReference type="SMR" id="Q5PAY2"/>
<dbReference type="KEGG" id="ama:AM524"/>
<dbReference type="HOGENOM" id="CLU_032087_0_3_5"/>
<dbReference type="GO" id="GO:0003723">
    <property type="term" value="F:RNA binding"/>
    <property type="evidence" value="ECO:0007669"/>
    <property type="project" value="InterPro"/>
</dbReference>
<dbReference type="GO" id="GO:0160148">
    <property type="term" value="F:tRNA pseudouridine(55) synthase activity"/>
    <property type="evidence" value="ECO:0007669"/>
    <property type="project" value="UniProtKB-EC"/>
</dbReference>
<dbReference type="GO" id="GO:1990481">
    <property type="term" value="P:mRNA pseudouridine synthesis"/>
    <property type="evidence" value="ECO:0007669"/>
    <property type="project" value="TreeGrafter"/>
</dbReference>
<dbReference type="GO" id="GO:0031119">
    <property type="term" value="P:tRNA pseudouridine synthesis"/>
    <property type="evidence" value="ECO:0007669"/>
    <property type="project" value="UniProtKB-UniRule"/>
</dbReference>
<dbReference type="CDD" id="cd02573">
    <property type="entry name" value="PseudoU_synth_EcTruB"/>
    <property type="match status" value="1"/>
</dbReference>
<dbReference type="Gene3D" id="3.30.2350.10">
    <property type="entry name" value="Pseudouridine synthase"/>
    <property type="match status" value="1"/>
</dbReference>
<dbReference type="HAMAP" id="MF_01080">
    <property type="entry name" value="TruB_bact"/>
    <property type="match status" value="1"/>
</dbReference>
<dbReference type="InterPro" id="IPR020103">
    <property type="entry name" value="PsdUridine_synth_cat_dom_sf"/>
</dbReference>
<dbReference type="InterPro" id="IPR002501">
    <property type="entry name" value="PsdUridine_synth_N"/>
</dbReference>
<dbReference type="InterPro" id="IPR014780">
    <property type="entry name" value="tRNA_psdUridine_synth_TruB"/>
</dbReference>
<dbReference type="InterPro" id="IPR032819">
    <property type="entry name" value="TruB_C"/>
</dbReference>
<dbReference type="NCBIfam" id="TIGR00431">
    <property type="entry name" value="TruB"/>
    <property type="match status" value="1"/>
</dbReference>
<dbReference type="PANTHER" id="PTHR13767:SF2">
    <property type="entry name" value="PSEUDOURIDYLATE SYNTHASE TRUB1"/>
    <property type="match status" value="1"/>
</dbReference>
<dbReference type="PANTHER" id="PTHR13767">
    <property type="entry name" value="TRNA-PSEUDOURIDINE SYNTHASE"/>
    <property type="match status" value="1"/>
</dbReference>
<dbReference type="Pfam" id="PF16198">
    <property type="entry name" value="TruB_C_2"/>
    <property type="match status" value="1"/>
</dbReference>
<dbReference type="Pfam" id="PF01509">
    <property type="entry name" value="TruB_N"/>
    <property type="match status" value="1"/>
</dbReference>
<dbReference type="SUPFAM" id="SSF55120">
    <property type="entry name" value="Pseudouridine synthase"/>
    <property type="match status" value="1"/>
</dbReference>
<evidence type="ECO:0000255" key="1">
    <source>
        <dbReference type="HAMAP-Rule" id="MF_01080"/>
    </source>
</evidence>